<sequence>MSTAREQPIFSTRAHVFQIDPATKRNWIPAGKHALTVSYFYDATRNVYRIISIGGAKAIINSTVTPNMTFTKTSQKFGQWADSRANTVYGLGFASEQHLTQFAEKFQEVKEAARLAREKSQDGGELTSPALGLASHQVPPSPLVSANGPGEEKLFRSQSADAPGPTERERLKKMLSEGSVGEVQWEAEFFALQDSNNKLAGALREANAAAAQWRQQLEAQRAEAERLRQRVAELEAQAASEVTPTGEKEGLGQGQSLEQLEALVQTKDQEIQTLKSQTGGPREALEAAEREETQQKVQDLETRNAELEHQLRAMERSLEEARAERERARAEVGRAAQLLDVSLFELSELREGLARLAEAAP</sequence>
<reference key="1">
    <citation type="journal article" date="1998" name="Neuron">
        <title>Homer regulates the association of group 1 metabotropic glutamate receptors with multivalent complexes of homer-related, synaptic proteins.</title>
        <authorList>
            <person name="Xiao B."/>
            <person name="Tu J.C."/>
            <person name="Petralia R.S."/>
            <person name="Yuan J.P."/>
            <person name="Doan A."/>
            <person name="Breder C.D."/>
            <person name="Ruggiero A."/>
            <person name="Lanahan A.A."/>
            <person name="Wenthold R.J."/>
            <person name="Worley P.F."/>
        </authorList>
    </citation>
    <scope>NUCLEOTIDE SEQUENCE [MRNA] (ISOFORM 2)</scope>
    <source>
        <tissue>Brain</tissue>
    </source>
</reference>
<reference key="2">
    <citation type="journal article" date="2000" name="J. Mol. Biol.">
        <title>Molecular characterisation of two structurally distinct groups of human homers, generated by extensive alternative splicing.</title>
        <authorList>
            <person name="Soloviev M."/>
            <person name="Ciruela F."/>
            <person name="Chan W.-Y."/>
            <person name="McIlhinney R.A.J."/>
        </authorList>
    </citation>
    <scope>NUCLEOTIDE SEQUENCE [MRNA] (ISOFORMS 1; 3; 4 AND 5)</scope>
    <scope>VARIANT ARG-342</scope>
</reference>
<reference key="3">
    <citation type="journal article" date="2004" name="Nat. Genet.">
        <title>Complete sequencing and characterization of 21,243 full-length human cDNAs.</title>
        <authorList>
            <person name="Ota T."/>
            <person name="Suzuki Y."/>
            <person name="Nishikawa T."/>
            <person name="Otsuki T."/>
            <person name="Sugiyama T."/>
            <person name="Irie R."/>
            <person name="Wakamatsu A."/>
            <person name="Hayashi K."/>
            <person name="Sato H."/>
            <person name="Nagai K."/>
            <person name="Kimura K."/>
            <person name="Makita H."/>
            <person name="Sekine M."/>
            <person name="Obayashi M."/>
            <person name="Nishi T."/>
            <person name="Shibahara T."/>
            <person name="Tanaka T."/>
            <person name="Ishii S."/>
            <person name="Yamamoto J."/>
            <person name="Saito K."/>
            <person name="Kawai Y."/>
            <person name="Isono Y."/>
            <person name="Nakamura Y."/>
            <person name="Nagahari K."/>
            <person name="Murakami K."/>
            <person name="Yasuda T."/>
            <person name="Iwayanagi T."/>
            <person name="Wagatsuma M."/>
            <person name="Shiratori A."/>
            <person name="Sudo H."/>
            <person name="Hosoiri T."/>
            <person name="Kaku Y."/>
            <person name="Kodaira H."/>
            <person name="Kondo H."/>
            <person name="Sugawara M."/>
            <person name="Takahashi M."/>
            <person name="Kanda K."/>
            <person name="Yokoi T."/>
            <person name="Furuya T."/>
            <person name="Kikkawa E."/>
            <person name="Omura Y."/>
            <person name="Abe K."/>
            <person name="Kamihara K."/>
            <person name="Katsuta N."/>
            <person name="Sato K."/>
            <person name="Tanikawa M."/>
            <person name="Yamazaki M."/>
            <person name="Ninomiya K."/>
            <person name="Ishibashi T."/>
            <person name="Yamashita H."/>
            <person name="Murakawa K."/>
            <person name="Fujimori K."/>
            <person name="Tanai H."/>
            <person name="Kimata M."/>
            <person name="Watanabe M."/>
            <person name="Hiraoka S."/>
            <person name="Chiba Y."/>
            <person name="Ishida S."/>
            <person name="Ono Y."/>
            <person name="Takiguchi S."/>
            <person name="Watanabe S."/>
            <person name="Yosida M."/>
            <person name="Hotuta T."/>
            <person name="Kusano J."/>
            <person name="Kanehori K."/>
            <person name="Takahashi-Fujii A."/>
            <person name="Hara H."/>
            <person name="Tanase T.-O."/>
            <person name="Nomura Y."/>
            <person name="Togiya S."/>
            <person name="Komai F."/>
            <person name="Hara R."/>
            <person name="Takeuchi K."/>
            <person name="Arita M."/>
            <person name="Imose N."/>
            <person name="Musashino K."/>
            <person name="Yuuki H."/>
            <person name="Oshima A."/>
            <person name="Sasaki N."/>
            <person name="Aotsuka S."/>
            <person name="Yoshikawa Y."/>
            <person name="Matsunawa H."/>
            <person name="Ichihara T."/>
            <person name="Shiohata N."/>
            <person name="Sano S."/>
            <person name="Moriya S."/>
            <person name="Momiyama H."/>
            <person name="Satoh N."/>
            <person name="Takami S."/>
            <person name="Terashima Y."/>
            <person name="Suzuki O."/>
            <person name="Nakagawa S."/>
            <person name="Senoh A."/>
            <person name="Mizoguchi H."/>
            <person name="Goto Y."/>
            <person name="Shimizu F."/>
            <person name="Wakebe H."/>
            <person name="Hishigaki H."/>
            <person name="Watanabe T."/>
            <person name="Sugiyama A."/>
            <person name="Takemoto M."/>
            <person name="Kawakami B."/>
            <person name="Yamazaki M."/>
            <person name="Watanabe K."/>
            <person name="Kumagai A."/>
            <person name="Itakura S."/>
            <person name="Fukuzumi Y."/>
            <person name="Fujimori Y."/>
            <person name="Komiyama M."/>
            <person name="Tashiro H."/>
            <person name="Tanigami A."/>
            <person name="Fujiwara T."/>
            <person name="Ono T."/>
            <person name="Yamada K."/>
            <person name="Fujii Y."/>
            <person name="Ozaki K."/>
            <person name="Hirao M."/>
            <person name="Ohmori Y."/>
            <person name="Kawabata A."/>
            <person name="Hikiji T."/>
            <person name="Kobatake N."/>
            <person name="Inagaki H."/>
            <person name="Ikema Y."/>
            <person name="Okamoto S."/>
            <person name="Okitani R."/>
            <person name="Kawakami T."/>
            <person name="Noguchi S."/>
            <person name="Itoh T."/>
            <person name="Shigeta K."/>
            <person name="Senba T."/>
            <person name="Matsumura K."/>
            <person name="Nakajima Y."/>
            <person name="Mizuno T."/>
            <person name="Morinaga M."/>
            <person name="Sasaki M."/>
            <person name="Togashi T."/>
            <person name="Oyama M."/>
            <person name="Hata H."/>
            <person name="Watanabe M."/>
            <person name="Komatsu T."/>
            <person name="Mizushima-Sugano J."/>
            <person name="Satoh T."/>
            <person name="Shirai Y."/>
            <person name="Takahashi Y."/>
            <person name="Nakagawa K."/>
            <person name="Okumura K."/>
            <person name="Nagase T."/>
            <person name="Nomura N."/>
            <person name="Kikuchi H."/>
            <person name="Masuho Y."/>
            <person name="Yamashita R."/>
            <person name="Nakai K."/>
            <person name="Yada T."/>
            <person name="Nakamura Y."/>
            <person name="Ohara O."/>
            <person name="Isogai T."/>
            <person name="Sugano S."/>
        </authorList>
    </citation>
    <scope>NUCLEOTIDE SEQUENCE [LARGE SCALE MRNA]</scope>
    <scope>VARIANT ARG-342</scope>
    <source>
        <tissue>Cerebellum</tissue>
    </source>
</reference>
<reference key="4">
    <citation type="journal article" date="2004" name="Nature">
        <title>The DNA sequence and biology of human chromosome 19.</title>
        <authorList>
            <person name="Grimwood J."/>
            <person name="Gordon L.A."/>
            <person name="Olsen A.S."/>
            <person name="Terry A."/>
            <person name="Schmutz J."/>
            <person name="Lamerdin J.E."/>
            <person name="Hellsten U."/>
            <person name="Goodstein D."/>
            <person name="Couronne O."/>
            <person name="Tran-Gyamfi M."/>
            <person name="Aerts A."/>
            <person name="Altherr M."/>
            <person name="Ashworth L."/>
            <person name="Bajorek E."/>
            <person name="Black S."/>
            <person name="Branscomb E."/>
            <person name="Caenepeel S."/>
            <person name="Carrano A.V."/>
            <person name="Caoile C."/>
            <person name="Chan Y.M."/>
            <person name="Christensen M."/>
            <person name="Cleland C.A."/>
            <person name="Copeland A."/>
            <person name="Dalin E."/>
            <person name="Dehal P."/>
            <person name="Denys M."/>
            <person name="Detter J.C."/>
            <person name="Escobar J."/>
            <person name="Flowers D."/>
            <person name="Fotopulos D."/>
            <person name="Garcia C."/>
            <person name="Georgescu A.M."/>
            <person name="Glavina T."/>
            <person name="Gomez M."/>
            <person name="Gonzales E."/>
            <person name="Groza M."/>
            <person name="Hammon N."/>
            <person name="Hawkins T."/>
            <person name="Haydu L."/>
            <person name="Ho I."/>
            <person name="Huang W."/>
            <person name="Israni S."/>
            <person name="Jett J."/>
            <person name="Kadner K."/>
            <person name="Kimball H."/>
            <person name="Kobayashi A."/>
            <person name="Larionov V."/>
            <person name="Leem S.-H."/>
            <person name="Lopez F."/>
            <person name="Lou Y."/>
            <person name="Lowry S."/>
            <person name="Malfatti S."/>
            <person name="Martinez D."/>
            <person name="McCready P.M."/>
            <person name="Medina C."/>
            <person name="Morgan J."/>
            <person name="Nelson K."/>
            <person name="Nolan M."/>
            <person name="Ovcharenko I."/>
            <person name="Pitluck S."/>
            <person name="Pollard M."/>
            <person name="Popkie A.P."/>
            <person name="Predki P."/>
            <person name="Quan G."/>
            <person name="Ramirez L."/>
            <person name="Rash S."/>
            <person name="Retterer J."/>
            <person name="Rodriguez A."/>
            <person name="Rogers S."/>
            <person name="Salamov A."/>
            <person name="Salazar A."/>
            <person name="She X."/>
            <person name="Smith D."/>
            <person name="Slezak T."/>
            <person name="Solovyev V."/>
            <person name="Thayer N."/>
            <person name="Tice H."/>
            <person name="Tsai M."/>
            <person name="Ustaszewska A."/>
            <person name="Vo N."/>
            <person name="Wagner M."/>
            <person name="Wheeler J."/>
            <person name="Wu K."/>
            <person name="Xie G."/>
            <person name="Yang J."/>
            <person name="Dubchak I."/>
            <person name="Furey T.S."/>
            <person name="DeJong P."/>
            <person name="Dickson M."/>
            <person name="Gordon D."/>
            <person name="Eichler E.E."/>
            <person name="Pennacchio L.A."/>
            <person name="Richardson P."/>
            <person name="Stubbs L."/>
            <person name="Rokhsar D.S."/>
            <person name="Myers R.M."/>
            <person name="Rubin E.M."/>
            <person name="Lucas S.M."/>
        </authorList>
    </citation>
    <scope>NUCLEOTIDE SEQUENCE [LARGE SCALE GENOMIC DNA]</scope>
</reference>
<reference key="5">
    <citation type="submission" date="2005-07" db="EMBL/GenBank/DDBJ databases">
        <authorList>
            <person name="Mural R.J."/>
            <person name="Istrail S."/>
            <person name="Sutton G.G."/>
            <person name="Florea L."/>
            <person name="Halpern A.L."/>
            <person name="Mobarry C.M."/>
            <person name="Lippert R."/>
            <person name="Walenz B."/>
            <person name="Shatkay H."/>
            <person name="Dew I."/>
            <person name="Miller J.R."/>
            <person name="Flanigan M.J."/>
            <person name="Edwards N.J."/>
            <person name="Bolanos R."/>
            <person name="Fasulo D."/>
            <person name="Halldorsson B.V."/>
            <person name="Hannenhalli S."/>
            <person name="Turner R."/>
            <person name="Yooseph S."/>
            <person name="Lu F."/>
            <person name="Nusskern D.R."/>
            <person name="Shue B.C."/>
            <person name="Zheng X.H."/>
            <person name="Zhong F."/>
            <person name="Delcher A.L."/>
            <person name="Huson D.H."/>
            <person name="Kravitz S.A."/>
            <person name="Mouchard L."/>
            <person name="Reinert K."/>
            <person name="Remington K.A."/>
            <person name="Clark A.G."/>
            <person name="Waterman M.S."/>
            <person name="Eichler E.E."/>
            <person name="Adams M.D."/>
            <person name="Hunkapiller M.W."/>
            <person name="Myers E.W."/>
            <person name="Venter J.C."/>
        </authorList>
    </citation>
    <scope>NUCLEOTIDE SEQUENCE [LARGE SCALE GENOMIC DNA]</scope>
    <scope>VARIANT ARG-342</scope>
</reference>
<reference key="6">
    <citation type="journal article" date="2004" name="Genome Res.">
        <title>The status, quality, and expansion of the NIH full-length cDNA project: the Mammalian Gene Collection (MGC).</title>
        <authorList>
            <consortium name="The MGC Project Team"/>
        </authorList>
    </citation>
    <scope>NUCLEOTIDE SEQUENCE [LARGE SCALE MRNA] (ISOFORM 1)</scope>
    <scope>VARIANT ARG-342</scope>
    <source>
        <tissue>Uterus</tissue>
    </source>
</reference>
<reference evidence="17" key="7">
    <citation type="journal article" date="2008" name="Science">
        <title>NFAT binding and regulation of T cell activation by the cytoplasmic scaffolding Homer proteins.</title>
        <authorList>
            <person name="Huang G.N."/>
            <person name="Huso D.L."/>
            <person name="Bouyain S."/>
            <person name="Tu J."/>
            <person name="McCorkell K.A."/>
            <person name="May M.J."/>
            <person name="Zhu Y."/>
            <person name="Lutz M."/>
            <person name="Collins S."/>
            <person name="Dehoff M."/>
            <person name="Kang S."/>
            <person name="Whartenby K."/>
            <person name="Powell J."/>
            <person name="Leahy D."/>
            <person name="Worley P.F."/>
        </authorList>
    </citation>
    <scope>X-RAY CRYSTALLOGRAPHY (1.85 ANGSTROMS) OF 2-118</scope>
    <scope>MUTAGENESIS OF ALA-22; 30-ALA-GLY-31; THR-36; SER-38; ALA-43; SER-52; 53-ILE--ALA-56 AND GLY-54</scope>
    <scope>REGION</scope>
    <scope>FUNCTION</scope>
    <scope>INTERACTION WITH NFATC1; NFATC2 AND NFATC4</scope>
</reference>
<reference evidence="18" key="8">
    <citation type="journal article" date="2009" name="Cell">
        <title>The postsynaptic density proteins Homer and Shank form a polymeric network structure.</title>
        <authorList>
            <person name="Hayashi M.K."/>
            <person name="Tang C."/>
            <person name="Verpelli C."/>
            <person name="Narayanan R."/>
            <person name="Stearns M.H."/>
            <person name="Xu R.M."/>
            <person name="Li H."/>
            <person name="Sala C."/>
            <person name="Hayashi Y."/>
        </authorList>
    </citation>
    <scope>X-RAY CRYSTALLOGRAPHY (2.90 ANGSTROMS) OF 287-361 OF TETRAMER</scope>
    <scope>INTERACTION WITH SHANK1</scope>
    <scope>SUBUNIT</scope>
</reference>
<dbReference type="EMBL" id="AF093265">
    <property type="protein sequence ID" value="AAC71029.1"/>
    <property type="molecule type" value="mRNA"/>
</dbReference>
<dbReference type="EMBL" id="Y17573">
    <property type="protein sequence ID" value="CAB75536.1"/>
    <property type="molecule type" value="mRNA"/>
</dbReference>
<dbReference type="EMBL" id="Y18894">
    <property type="protein sequence ID" value="CAB75543.1"/>
    <property type="molecule type" value="mRNA"/>
</dbReference>
<dbReference type="EMBL" id="Y18895">
    <property type="protein sequence ID" value="CAB75544.1"/>
    <property type="molecule type" value="mRNA"/>
</dbReference>
<dbReference type="EMBL" id="Y18896">
    <property type="protein sequence ID" value="CAB75545.1"/>
    <property type="molecule type" value="mRNA"/>
</dbReference>
<dbReference type="EMBL" id="AK124450">
    <property type="protein sequence ID" value="BAG54040.1"/>
    <property type="molecule type" value="mRNA"/>
</dbReference>
<dbReference type="EMBL" id="AK313995">
    <property type="protein sequence ID" value="BAG36707.1"/>
    <property type="molecule type" value="mRNA"/>
</dbReference>
<dbReference type="EMBL" id="AC002985">
    <property type="protein sequence ID" value="AAB81545.1"/>
    <property type="status" value="ALT_SEQ"/>
    <property type="molecule type" value="Genomic_DNA"/>
</dbReference>
<dbReference type="EMBL" id="CH471106">
    <property type="protein sequence ID" value="EAW84763.1"/>
    <property type="molecule type" value="Genomic_DNA"/>
</dbReference>
<dbReference type="EMBL" id="BC012113">
    <property type="protein sequence ID" value="AAH12113.1"/>
    <property type="molecule type" value="mRNA"/>
</dbReference>
<dbReference type="CCDS" id="CCDS12391.1">
    <molecule id="Q9NSC5-1"/>
</dbReference>
<dbReference type="CCDS" id="CCDS46022.1">
    <molecule id="Q9NSC5-5"/>
</dbReference>
<dbReference type="CCDS" id="CCDS46023.1">
    <molecule id="Q9NSC5-2"/>
</dbReference>
<dbReference type="RefSeq" id="NP_001139193.1">
    <molecule id="Q9NSC5-2"/>
    <property type="nucleotide sequence ID" value="NM_001145721.1"/>
</dbReference>
<dbReference type="RefSeq" id="NP_001139194.1">
    <molecule id="Q9NSC5-1"/>
    <property type="nucleotide sequence ID" value="NM_001145722.2"/>
</dbReference>
<dbReference type="RefSeq" id="NP_001139196.1">
    <molecule id="Q9NSC5-5"/>
    <property type="nucleotide sequence ID" value="NM_001145724.1"/>
</dbReference>
<dbReference type="RefSeq" id="NP_004829.3">
    <molecule id="Q9NSC5-1"/>
    <property type="nucleotide sequence ID" value="NM_004838.3"/>
</dbReference>
<dbReference type="RefSeq" id="XP_006723006.1">
    <property type="nucleotide sequence ID" value="XM_006722943.1"/>
</dbReference>
<dbReference type="RefSeq" id="XP_006723007.1">
    <property type="nucleotide sequence ID" value="XM_006722944.1"/>
</dbReference>
<dbReference type="RefSeq" id="XP_047295689.1">
    <molecule id="Q9NSC5-1"/>
    <property type="nucleotide sequence ID" value="XM_047439733.1"/>
</dbReference>
<dbReference type="PDB" id="2P8V">
    <property type="method" value="X-ray"/>
    <property type="resolution" value="1.85 A"/>
    <property type="chains" value="A=2-118"/>
</dbReference>
<dbReference type="PDB" id="3CVF">
    <property type="method" value="X-ray"/>
    <property type="resolution" value="2.90 A"/>
    <property type="chains" value="A/B/C/D=287-361"/>
</dbReference>
<dbReference type="PDBsum" id="2P8V"/>
<dbReference type="PDBsum" id="3CVF"/>
<dbReference type="BMRB" id="Q9NSC5"/>
<dbReference type="SMR" id="Q9NSC5"/>
<dbReference type="BioGRID" id="114843">
    <property type="interactions" value="152"/>
</dbReference>
<dbReference type="CORUM" id="Q9NSC5"/>
<dbReference type="FunCoup" id="Q9NSC5">
    <property type="interactions" value="580"/>
</dbReference>
<dbReference type="IntAct" id="Q9NSC5">
    <property type="interactions" value="130"/>
</dbReference>
<dbReference type="MINT" id="Q9NSC5"/>
<dbReference type="STRING" id="9606.ENSP00000439937"/>
<dbReference type="GlyGen" id="Q9NSC5">
    <property type="glycosylation" value="1 site"/>
</dbReference>
<dbReference type="iPTMnet" id="Q9NSC5"/>
<dbReference type="PhosphoSitePlus" id="Q9NSC5"/>
<dbReference type="BioMuta" id="HOMER3"/>
<dbReference type="DMDM" id="38605068"/>
<dbReference type="jPOST" id="Q9NSC5"/>
<dbReference type="MassIVE" id="Q9NSC5"/>
<dbReference type="PaxDb" id="9606-ENSP00000439937"/>
<dbReference type="PeptideAtlas" id="Q9NSC5"/>
<dbReference type="ProteomicsDB" id="19531"/>
<dbReference type="ProteomicsDB" id="82529">
    <molecule id="Q9NSC5-1"/>
</dbReference>
<dbReference type="ProteomicsDB" id="82530">
    <molecule id="Q9NSC5-2"/>
</dbReference>
<dbReference type="ProteomicsDB" id="82531">
    <molecule id="Q9NSC5-3"/>
</dbReference>
<dbReference type="ProteomicsDB" id="82532">
    <molecule id="Q9NSC5-4"/>
</dbReference>
<dbReference type="Pumba" id="Q9NSC5"/>
<dbReference type="Antibodypedia" id="28304">
    <property type="antibodies" value="232 antibodies from 27 providers"/>
</dbReference>
<dbReference type="DNASU" id="9454"/>
<dbReference type="Ensembl" id="ENST00000221222.15">
    <molecule id="Q9NSC5-2"/>
    <property type="protein sequence ID" value="ENSP00000221222.11"/>
    <property type="gene ID" value="ENSG00000051128.19"/>
</dbReference>
<dbReference type="Ensembl" id="ENST00000392351.8">
    <molecule id="Q9NSC5-1"/>
    <property type="protein sequence ID" value="ENSP00000376162.2"/>
    <property type="gene ID" value="ENSG00000051128.19"/>
</dbReference>
<dbReference type="Ensembl" id="ENST00000433218.6">
    <molecule id="Q9NSC5-2"/>
    <property type="protein sequence ID" value="ENSP00000396154.2"/>
    <property type="gene ID" value="ENSG00000051128.19"/>
</dbReference>
<dbReference type="Ensembl" id="ENST00000539827.5">
    <molecule id="Q9NSC5-1"/>
    <property type="protein sequence ID" value="ENSP00000439937.1"/>
    <property type="gene ID" value="ENSG00000051128.19"/>
</dbReference>
<dbReference type="Ensembl" id="ENST00000542541.6">
    <molecule id="Q9NSC5-1"/>
    <property type="protein sequence ID" value="ENSP00000446026.1"/>
    <property type="gene ID" value="ENSG00000051128.19"/>
</dbReference>
<dbReference type="Ensembl" id="ENST00000594439.5">
    <molecule id="Q9NSC5-5"/>
    <property type="protein sequence ID" value="ENSP00000471835.1"/>
    <property type="gene ID" value="ENSG00000051128.19"/>
</dbReference>
<dbReference type="GeneID" id="9454"/>
<dbReference type="KEGG" id="hsa:9454"/>
<dbReference type="MANE-Select" id="ENST00000392351.8">
    <property type="protein sequence ID" value="ENSP00000376162.2"/>
    <property type="RefSeq nucleotide sequence ID" value="NM_004838.4"/>
    <property type="RefSeq protein sequence ID" value="NP_004829.3"/>
</dbReference>
<dbReference type="UCSC" id="uc002nku.3">
    <molecule id="Q9NSC5-1"/>
    <property type="organism name" value="human"/>
</dbReference>
<dbReference type="AGR" id="HGNC:17514"/>
<dbReference type="CTD" id="9454"/>
<dbReference type="DisGeNET" id="9454"/>
<dbReference type="GeneCards" id="HOMER3"/>
<dbReference type="HGNC" id="HGNC:17514">
    <property type="gene designation" value="HOMER3"/>
</dbReference>
<dbReference type="HPA" id="ENSG00000051128">
    <property type="expression patterns" value="Low tissue specificity"/>
</dbReference>
<dbReference type="MIM" id="604800">
    <property type="type" value="gene"/>
</dbReference>
<dbReference type="neXtProt" id="NX_Q9NSC5"/>
<dbReference type="OpenTargets" id="ENSG00000051128"/>
<dbReference type="PharmGKB" id="PA134988320"/>
<dbReference type="VEuPathDB" id="HostDB:ENSG00000051128"/>
<dbReference type="eggNOG" id="ENOG502R3T0">
    <property type="taxonomic scope" value="Eukaryota"/>
</dbReference>
<dbReference type="GeneTree" id="ENSGT00940000158081"/>
<dbReference type="HOGENOM" id="CLU_033940_0_0_1"/>
<dbReference type="InParanoid" id="Q9NSC5"/>
<dbReference type="OMA" id="XVPPSPL"/>
<dbReference type="OrthoDB" id="9983798at2759"/>
<dbReference type="PAN-GO" id="Q9NSC5">
    <property type="GO annotations" value="7 GO annotations based on evolutionary models"/>
</dbReference>
<dbReference type="PhylomeDB" id="Q9NSC5"/>
<dbReference type="TreeFam" id="TF325627"/>
<dbReference type="PathwayCommons" id="Q9NSC5"/>
<dbReference type="Reactome" id="R-HSA-6794361">
    <property type="pathway name" value="Neurexins and neuroligins"/>
</dbReference>
<dbReference type="SignaLink" id="Q9NSC5"/>
<dbReference type="SIGNOR" id="Q9NSC5"/>
<dbReference type="BioGRID-ORCS" id="9454">
    <property type="hits" value="40 hits in 1158 CRISPR screens"/>
</dbReference>
<dbReference type="CD-CODE" id="6D6C8CDE">
    <property type="entry name" value="Synthetic Condensate 000237"/>
</dbReference>
<dbReference type="CD-CODE" id="6DD039B3">
    <property type="entry name" value="Synthetic Condensate 000229"/>
</dbReference>
<dbReference type="CD-CODE" id="9800A23F">
    <property type="entry name" value="Synthetic Condensate 000231"/>
</dbReference>
<dbReference type="CD-CODE" id="A81FC5A0">
    <property type="entry name" value="Synthetic Condensate 000233"/>
</dbReference>
<dbReference type="CD-CODE" id="D23CAB07">
    <property type="entry name" value="Synthetic Condensate 000243"/>
</dbReference>
<dbReference type="CD-CODE" id="F7E61417">
    <property type="entry name" value="Synthetic Condensate 000244"/>
</dbReference>
<dbReference type="CD-CODE" id="FB4E32DD">
    <property type="entry name" value="Presynaptic clusters and postsynaptic densities"/>
</dbReference>
<dbReference type="EvolutionaryTrace" id="Q9NSC5"/>
<dbReference type="GeneWiki" id="HOMER3"/>
<dbReference type="GenomeRNAi" id="9454"/>
<dbReference type="Pharos" id="Q9NSC5">
    <property type="development level" value="Tbio"/>
</dbReference>
<dbReference type="PRO" id="PR:Q9NSC5"/>
<dbReference type="Proteomes" id="UP000005640">
    <property type="component" value="Chromosome 19"/>
</dbReference>
<dbReference type="RNAct" id="Q9NSC5">
    <property type="molecule type" value="protein"/>
</dbReference>
<dbReference type="Bgee" id="ENSG00000051128">
    <property type="expression patterns" value="Expressed in cerebellar vermis and 197 other cell types or tissues"/>
</dbReference>
<dbReference type="ExpressionAtlas" id="Q9NSC5">
    <property type="expression patterns" value="baseline and differential"/>
</dbReference>
<dbReference type="GO" id="GO:0045178">
    <property type="term" value="C:basal part of cell"/>
    <property type="evidence" value="ECO:0007669"/>
    <property type="project" value="Ensembl"/>
</dbReference>
<dbReference type="GO" id="GO:0005737">
    <property type="term" value="C:cytoplasm"/>
    <property type="evidence" value="ECO:0000318"/>
    <property type="project" value="GO_Central"/>
</dbReference>
<dbReference type="GO" id="GO:0005829">
    <property type="term" value="C:cytosol"/>
    <property type="evidence" value="ECO:0000304"/>
    <property type="project" value="Reactome"/>
</dbReference>
<dbReference type="GO" id="GO:0030425">
    <property type="term" value="C:dendrite"/>
    <property type="evidence" value="ECO:0000318"/>
    <property type="project" value="GO_Central"/>
</dbReference>
<dbReference type="GO" id="GO:0098978">
    <property type="term" value="C:glutamatergic synapse"/>
    <property type="evidence" value="ECO:0007669"/>
    <property type="project" value="Ensembl"/>
</dbReference>
<dbReference type="GO" id="GO:0005886">
    <property type="term" value="C:plasma membrane"/>
    <property type="evidence" value="ECO:0000318"/>
    <property type="project" value="GO_Central"/>
</dbReference>
<dbReference type="GO" id="GO:0014069">
    <property type="term" value="C:postsynaptic density"/>
    <property type="evidence" value="ECO:0000318"/>
    <property type="project" value="GO_Central"/>
</dbReference>
<dbReference type="GO" id="GO:0035256">
    <property type="term" value="F:G protein-coupled glutamate receptor binding"/>
    <property type="evidence" value="ECO:0000318"/>
    <property type="project" value="GO_Central"/>
</dbReference>
<dbReference type="GO" id="GO:0042802">
    <property type="term" value="F:identical protein binding"/>
    <property type="evidence" value="ECO:0000353"/>
    <property type="project" value="IntAct"/>
</dbReference>
<dbReference type="GO" id="GO:0019904">
    <property type="term" value="F:protein domain specific binding"/>
    <property type="evidence" value="ECO:0007669"/>
    <property type="project" value="Ensembl"/>
</dbReference>
<dbReference type="GO" id="GO:0007216">
    <property type="term" value="P:G protein-coupled glutamate receptor signaling pathway"/>
    <property type="evidence" value="ECO:0000318"/>
    <property type="project" value="GO_Central"/>
</dbReference>
<dbReference type="GO" id="GO:0070885">
    <property type="term" value="P:negative regulation of calcineurin-NFAT signaling cascade"/>
    <property type="evidence" value="ECO:0000315"/>
    <property type="project" value="UniProtKB"/>
</dbReference>
<dbReference type="GO" id="GO:0032703">
    <property type="term" value="P:negative regulation of interleukin-2 production"/>
    <property type="evidence" value="ECO:0000315"/>
    <property type="project" value="UniProtKB"/>
</dbReference>
<dbReference type="GO" id="GO:0006605">
    <property type="term" value="P:protein targeting"/>
    <property type="evidence" value="ECO:0000304"/>
    <property type="project" value="UniProtKB"/>
</dbReference>
<dbReference type="GO" id="GO:2001256">
    <property type="term" value="P:regulation of store-operated calcium entry"/>
    <property type="evidence" value="ECO:0000318"/>
    <property type="project" value="GO_Central"/>
</dbReference>
<dbReference type="CDD" id="cd01206">
    <property type="entry name" value="EVH1_Homer_Vesl"/>
    <property type="match status" value="1"/>
</dbReference>
<dbReference type="FunFam" id="2.30.29.30:FF:000014">
    <property type="entry name" value="Homer homolog 1 (Drosophila)"/>
    <property type="match status" value="1"/>
</dbReference>
<dbReference type="FunFam" id="1.20.5.1700:FF:000005">
    <property type="entry name" value="homer protein homolog 3 isoform X1"/>
    <property type="match status" value="1"/>
</dbReference>
<dbReference type="Gene3D" id="1.20.5.1700">
    <property type="match status" value="1"/>
</dbReference>
<dbReference type="Gene3D" id="2.30.29.30">
    <property type="entry name" value="Pleckstrin-homology domain (PH domain)/Phosphotyrosine-binding domain (PTB)"/>
    <property type="match status" value="1"/>
</dbReference>
<dbReference type="InterPro" id="IPR045027">
    <property type="entry name" value="Homer"/>
</dbReference>
<dbReference type="InterPro" id="IPR044100">
    <property type="entry name" value="Homer_EVH1"/>
</dbReference>
<dbReference type="InterPro" id="IPR011993">
    <property type="entry name" value="PH-like_dom_sf"/>
</dbReference>
<dbReference type="InterPro" id="IPR000697">
    <property type="entry name" value="WH1/EVH1_dom"/>
</dbReference>
<dbReference type="PANTHER" id="PTHR10918">
    <property type="entry name" value="HOMER"/>
    <property type="match status" value="1"/>
</dbReference>
<dbReference type="Pfam" id="PF00568">
    <property type="entry name" value="WH1"/>
    <property type="match status" value="1"/>
</dbReference>
<dbReference type="SMART" id="SM00461">
    <property type="entry name" value="WH1"/>
    <property type="match status" value="1"/>
</dbReference>
<dbReference type="SUPFAM" id="SSF50729">
    <property type="entry name" value="PH domain-like"/>
    <property type="match status" value="1"/>
</dbReference>
<dbReference type="PROSITE" id="PS50229">
    <property type="entry name" value="WH1"/>
    <property type="match status" value="1"/>
</dbReference>
<evidence type="ECO:0000250" key="1"/>
<evidence type="ECO:0000250" key="2">
    <source>
        <dbReference type="UniProtKB" id="Q99JP6"/>
    </source>
</evidence>
<evidence type="ECO:0000250" key="3">
    <source>
        <dbReference type="UniProtKB" id="Q9Z2X5"/>
    </source>
</evidence>
<evidence type="ECO:0000255" key="4"/>
<evidence type="ECO:0000255" key="5">
    <source>
        <dbReference type="PROSITE-ProRule" id="PRU00410"/>
    </source>
</evidence>
<evidence type="ECO:0000256" key="6">
    <source>
        <dbReference type="SAM" id="MobiDB-lite"/>
    </source>
</evidence>
<evidence type="ECO:0000269" key="7">
    <source>
    </source>
</evidence>
<evidence type="ECO:0000269" key="8">
    <source>
    </source>
</evidence>
<evidence type="ECO:0000269" key="9">
    <source>
    </source>
</evidence>
<evidence type="ECO:0000269" key="10">
    <source>
    </source>
</evidence>
<evidence type="ECO:0000269" key="11">
    <source>
    </source>
</evidence>
<evidence type="ECO:0000269" key="12">
    <source ref="5"/>
</evidence>
<evidence type="ECO:0000303" key="13">
    <source>
    </source>
</evidence>
<evidence type="ECO:0000303" key="14">
    <source>
    </source>
</evidence>
<evidence type="ECO:0000305" key="15"/>
<evidence type="ECO:0000312" key="16">
    <source>
        <dbReference type="HGNC" id="HGNC:17514"/>
    </source>
</evidence>
<evidence type="ECO:0007744" key="17">
    <source>
        <dbReference type="PDB" id="2P8V"/>
    </source>
</evidence>
<evidence type="ECO:0007744" key="18">
    <source>
        <dbReference type="PDB" id="3CVF"/>
    </source>
</evidence>
<evidence type="ECO:0007829" key="19">
    <source>
        <dbReference type="PDB" id="2P8V"/>
    </source>
</evidence>
<evidence type="ECO:0007829" key="20">
    <source>
        <dbReference type="PDB" id="3CVF"/>
    </source>
</evidence>
<proteinExistence type="evidence at protein level"/>
<protein>
    <recommendedName>
        <fullName evidence="15">Homer protein homolog 3</fullName>
        <shortName>Homer-3</shortName>
    </recommendedName>
</protein>
<comment type="function">
    <text evidence="10">Postsynaptic density scaffolding protein. Binds and cross-links cytoplasmic regions of GRM1, GRM5, ITPR1, DNM3, RYR1, RYR2, SHANK1 and SHANK3. By physically linking GRM1 and GRM5 with ER-associated ITPR1 receptors, it aids the coupling of surface receptors to intracellular calcium release. Isoforms can be differently regulated and may play an important role in maintaining the plasticity at glutamatergic synapses. Negatively regulates T cell activation by inhibiting the calcineurin-NFAT pathway. Acts by competing with calcineurin/PPP3CA for NFAT protein binding, hence preventing NFAT activation by PPP3CA (PubMed:18218901).</text>
</comment>
<comment type="subunit">
    <text evidence="10 11">Tetramer (PubMed:19345194). Isoform 1 and isoform 2 encode coiled-coil structures that mediate homo- and heteromultimerization. Interacts with NFATC2; interaction is calcium independent; interaction competes with PPP3CA for NFATC2 binding; interaction is reduced by AKT activation (PubMed:18218901). Interacts with NFATC1 and NFATC4 (PubMed:18218901). Interacts with SHANK1; forms a high-order complex at least composed of SHANK1 and HOMER3; the complex formation is regulated by CAMK2A-mediated phosphorylation (PubMed:19345194).</text>
</comment>
<comment type="interaction">
    <interactant intactId="EBI-748420">
        <id>Q9NSC5</id>
    </interactant>
    <interactant intactId="EBI-11743294">
        <id>Q8IZP0-5</id>
        <label>ABI1</label>
    </interactant>
    <organismsDiffer>false</organismsDiffer>
    <experiments>3</experiments>
</comment>
<comment type="interaction">
    <interactant intactId="EBI-748420">
        <id>Q9NSC5</id>
    </interactant>
    <interactant intactId="EBI-743598">
        <id>Q9NYB9</id>
        <label>ABI2</label>
    </interactant>
    <organismsDiffer>false</organismsDiffer>
    <experiments>8</experiments>
</comment>
<comment type="interaction">
    <interactant intactId="EBI-748420">
        <id>Q9NSC5</id>
    </interactant>
    <interactant intactId="EBI-11096309">
        <id>Q9NYB9-2</id>
        <label>ABI2</label>
    </interactant>
    <organismsDiffer>false</organismsDiffer>
    <experiments>3</experiments>
</comment>
<comment type="interaction">
    <interactant intactId="EBI-748420">
        <id>Q9NSC5</id>
    </interactant>
    <interactant intactId="EBI-742038">
        <id>Q9P2A4</id>
        <label>ABI3</label>
    </interactant>
    <organismsDiffer>false</organismsDiffer>
    <experiments>8</experiments>
</comment>
<comment type="interaction">
    <interactant intactId="EBI-748420">
        <id>Q9NSC5</id>
    </interactant>
    <interactant intactId="EBI-302661">
        <id>P05067-8</id>
        <label>APP</label>
    </interactant>
    <organismsDiffer>false</organismsDiffer>
    <experiments>3</experiments>
</comment>
<comment type="interaction">
    <interactant intactId="EBI-748420">
        <id>Q9NSC5</id>
    </interactant>
    <interactant intactId="EBI-11343438">
        <id>Q3SXY8</id>
        <label>ARL13B</label>
    </interactant>
    <organismsDiffer>false</organismsDiffer>
    <experiments>3</experiments>
</comment>
<comment type="interaction">
    <interactant intactId="EBI-748420">
        <id>Q9NSC5</id>
    </interactant>
    <interactant intactId="EBI-715110">
        <id>Q53FE4</id>
        <label>C4orf17</label>
    </interactant>
    <organismsDiffer>false</organismsDiffer>
    <experiments>3</experiments>
</comment>
<comment type="interaction">
    <interactant intactId="EBI-748420">
        <id>Q9NSC5</id>
    </interactant>
    <interactant intactId="EBI-744556">
        <id>Q96HB5</id>
        <label>CCDC120</label>
    </interactant>
    <organismsDiffer>false</organismsDiffer>
    <experiments>3</experiments>
</comment>
<comment type="interaction">
    <interactant intactId="EBI-748420">
        <id>Q9NSC5</id>
    </interactant>
    <interactant intactId="EBI-49119542">
        <id>Q6ZP82-1</id>
        <label>CCDC141</label>
    </interactant>
    <organismsDiffer>false</organismsDiffer>
    <experiments>3</experiments>
</comment>
<comment type="interaction">
    <interactant intactId="EBI-748420">
        <id>Q9NSC5</id>
    </interactant>
    <interactant intactId="EBI-295634">
        <id>Q16543</id>
        <label>CDC37</label>
    </interactant>
    <organismsDiffer>false</organismsDiffer>
    <experiments>3</experiments>
</comment>
<comment type="interaction">
    <interactant intactId="EBI-748420">
        <id>Q9NSC5</id>
    </interactant>
    <interactant intactId="EBI-746238">
        <id>Q07002</id>
        <label>CDK18</label>
    </interactant>
    <organismsDiffer>false</organismsDiffer>
    <experiments>3</experiments>
</comment>
<comment type="interaction">
    <interactant intactId="EBI-748420">
        <id>Q9NSC5</id>
    </interactant>
    <interactant intactId="EBI-5453285">
        <id>Q2TBE0</id>
        <label>CWF19L2</label>
    </interactant>
    <organismsDiffer>false</organismsDiffer>
    <experiments>3</experiments>
</comment>
<comment type="interaction">
    <interactant intactId="EBI-748420">
        <id>Q9NSC5</id>
    </interactant>
    <interactant intactId="EBI-739789">
        <id>Q92997</id>
        <label>DVL3</label>
    </interactant>
    <organismsDiffer>false</organismsDiffer>
    <experiments>3</experiments>
</comment>
<comment type="interaction">
    <interactant intactId="EBI-748420">
        <id>Q9NSC5</id>
    </interactant>
    <interactant intactId="EBI-349105">
        <id>P63167</id>
        <label>DYNLL1</label>
    </interactant>
    <organismsDiffer>false</organismsDiffer>
    <experiments>5</experiments>
</comment>
<comment type="interaction">
    <interactant intactId="EBI-748420">
        <id>Q9NSC5</id>
    </interactant>
    <interactant intactId="EBI-742371">
        <id>Q96FJ2</id>
        <label>DYNLL2</label>
    </interactant>
    <organismsDiffer>false</organismsDiffer>
    <experiments>5</experiments>
</comment>
<comment type="interaction">
    <interactant intactId="EBI-748420">
        <id>Q9NSC5</id>
    </interactant>
    <interactant intactId="EBI-769261">
        <id>Q96JC9</id>
        <label>EAF1</label>
    </interactant>
    <organismsDiffer>false</organismsDiffer>
    <experiments>7</experiments>
</comment>
<comment type="interaction">
    <interactant intactId="EBI-748420">
        <id>Q9NSC5</id>
    </interactant>
    <interactant intactId="EBI-743105">
        <id>Q5JVL4</id>
        <label>EFHC1</label>
    </interactant>
    <organismsDiffer>false</organismsDiffer>
    <experiments>3</experiments>
</comment>
<comment type="interaction">
    <interactant intactId="EBI-748420">
        <id>Q9NSC5</id>
    </interactant>
    <interactant intactId="EBI-353818">
        <id>O15371</id>
        <label>EIF3D</label>
    </interactant>
    <organismsDiffer>false</organismsDiffer>
    <experiments>8</experiments>
</comment>
<comment type="interaction">
    <interactant intactId="EBI-748420">
        <id>Q9NSC5</id>
    </interactant>
    <interactant intactId="EBI-7225287">
        <id>Q96MY7</id>
        <label>FAM161B</label>
    </interactant>
    <organismsDiffer>false</organismsDiffer>
    <experiments>3</experiments>
</comment>
<comment type="interaction">
    <interactant intactId="EBI-748420">
        <id>Q9NSC5</id>
    </interactant>
    <interactant intactId="EBI-6658203">
        <id>Q86YD7</id>
        <label>FAM90A1</label>
    </interactant>
    <organismsDiffer>false</organismsDiffer>
    <experiments>3</experiments>
</comment>
<comment type="interaction">
    <interactant intactId="EBI-748420">
        <id>Q9NSC5</id>
    </interactant>
    <interactant intactId="EBI-1171918">
        <id>Q14517</id>
        <label>FAT1</label>
    </interactant>
    <organismsDiffer>false</organismsDiffer>
    <experiments>4</experiments>
</comment>
<comment type="interaction">
    <interactant intactId="EBI-748420">
        <id>Q9NSC5</id>
    </interactant>
    <interactant intactId="EBI-740282">
        <id>Q9NVF7</id>
        <label>FBXO28</label>
    </interactant>
    <organismsDiffer>false</organismsDiffer>
    <experiments>6</experiments>
</comment>
<comment type="interaction">
    <interactant intactId="EBI-748420">
        <id>Q9NSC5</id>
    </interactant>
    <interactant intactId="EBI-1104821">
        <id>O94915</id>
        <label>FRYL</label>
    </interactant>
    <organismsDiffer>false</organismsDiffer>
    <experiments>3</experiments>
</comment>
<comment type="interaction">
    <interactant intactId="EBI-748420">
        <id>Q9NSC5</id>
    </interactant>
    <interactant intactId="EBI-12023420">
        <id>O94915-2</id>
        <label>FRYL</label>
    </interactant>
    <organismsDiffer>false</organismsDiffer>
    <experiments>3</experiments>
</comment>
<comment type="interaction">
    <interactant intactId="EBI-748420">
        <id>Q9NSC5</id>
    </interactant>
    <interactant intactId="EBI-1052570">
        <id>O95995</id>
        <label>GAS8</label>
    </interactant>
    <organismsDiffer>false</organismsDiffer>
    <experiments>3</experiments>
</comment>
<comment type="interaction">
    <interactant intactId="EBI-748420">
        <id>Q9NSC5</id>
    </interactant>
    <interactant intactId="EBI-10259069">
        <id>Q86UU5</id>
        <label>GGN</label>
    </interactant>
    <organismsDiffer>false</organismsDiffer>
    <experiments>3</experiments>
</comment>
<comment type="interaction">
    <interactant intactId="EBI-748420">
        <id>Q9NSC5</id>
    </interactant>
    <interactant intactId="EBI-746815">
        <id>Q86YM7</id>
        <label>HOMER1</label>
    </interactant>
    <organismsDiffer>false</organismsDiffer>
    <experiments>18</experiments>
</comment>
<comment type="interaction">
    <interactant intactId="EBI-748420">
        <id>Q9NSC5</id>
    </interactant>
    <interactant intactId="EBI-748420">
        <id>Q9NSC5</id>
        <label>HOMER3</label>
    </interactant>
    <organismsDiffer>false</organismsDiffer>
    <experiments>7</experiments>
</comment>
<comment type="interaction">
    <interactant intactId="EBI-748420">
        <id>Q9NSC5</id>
    </interactant>
    <interactant intactId="EBI-3893317">
        <id>P09067</id>
        <label>HOXB5</label>
    </interactant>
    <organismsDiffer>false</organismsDiffer>
    <experiments>3</experiments>
</comment>
<comment type="interaction">
    <interactant intactId="EBI-748420">
        <id>Q9NSC5</id>
    </interactant>
    <interactant intactId="EBI-6509505">
        <id>Q0VD86</id>
        <label>INCA1</label>
    </interactant>
    <organismsDiffer>false</organismsDiffer>
    <experiments>3</experiments>
</comment>
<comment type="interaction">
    <interactant intactId="EBI-748420">
        <id>Q9NSC5</id>
    </interactant>
    <interactant intactId="EBI-2556193">
        <id>Q63ZY3</id>
        <label>KANK2</label>
    </interactant>
    <organismsDiffer>false</organismsDiffer>
    <experiments>3</experiments>
</comment>
<comment type="interaction">
    <interactant intactId="EBI-748420">
        <id>Q9NSC5</id>
    </interactant>
    <interactant intactId="EBI-9355810">
        <id>Q5T7N3</id>
        <label>KANK4</label>
    </interactant>
    <organismsDiffer>false</organismsDiffer>
    <experiments>3</experiments>
</comment>
<comment type="interaction">
    <interactant intactId="EBI-748420">
        <id>Q9NSC5</id>
    </interactant>
    <interactant intactId="EBI-710124">
        <id>O60341</id>
        <label>KDM1A</label>
    </interactant>
    <organismsDiffer>false</organismsDiffer>
    <experiments>3</experiments>
</comment>
<comment type="interaction">
    <interactant intactId="EBI-748420">
        <id>Q9NSC5</id>
    </interactant>
    <interactant intactId="EBI-10241353">
        <id>Q3SYF9</id>
        <label>KRTAP19-7</label>
    </interactant>
    <organismsDiffer>false</organismsDiffer>
    <experiments>3</experiments>
</comment>
<comment type="interaction">
    <interactant intactId="EBI-748420">
        <id>Q9NSC5</id>
    </interactant>
    <interactant intactId="EBI-12179869">
        <id>P50458</id>
        <label>LHX2</label>
    </interactant>
    <organismsDiffer>false</organismsDiffer>
    <experiments>3</experiments>
</comment>
<comment type="interaction">
    <interactant intactId="EBI-748420">
        <id>Q9NSC5</id>
    </interactant>
    <interactant intactId="EBI-739832">
        <id>Q8TBB1</id>
        <label>LNX1</label>
    </interactant>
    <organismsDiffer>false</organismsDiffer>
    <experiments>6</experiments>
</comment>
<comment type="interaction">
    <interactant intactId="EBI-748420">
        <id>Q9NSC5</id>
    </interactant>
    <interactant intactId="EBI-10171988">
        <id>A1L1C6</id>
        <label>LRRC7</label>
    </interactant>
    <organismsDiffer>false</organismsDiffer>
    <experiments>3</experiments>
</comment>
<comment type="interaction">
    <interactant intactId="EBI-748420">
        <id>Q9NSC5</id>
    </interactant>
    <interactant intactId="EBI-19133880">
        <id>Q9BX40-2</id>
        <label>LSM14B</label>
    </interactant>
    <organismsDiffer>false</organismsDiffer>
    <experiments>3</experiments>
</comment>
<comment type="interaction">
    <interactant intactId="EBI-748420">
        <id>Q9NSC5</id>
    </interactant>
    <interactant intactId="EBI-3951677">
        <id>Q8TC05</id>
        <label>MDM1</label>
    </interactant>
    <organismsDiffer>false</organismsDiffer>
    <experiments>3</experiments>
</comment>
<comment type="interaction">
    <interactant intactId="EBI-748420">
        <id>Q9NSC5</id>
    </interactant>
    <interactant intactId="EBI-2864512">
        <id>P50221</id>
        <label>MEOX1</label>
    </interactant>
    <organismsDiffer>false</organismsDiffer>
    <experiments>3</experiments>
</comment>
<comment type="interaction">
    <interactant intactId="EBI-748420">
        <id>Q9NSC5</id>
    </interactant>
    <interactant intactId="EBI-1048159">
        <id>P55081</id>
        <label>MFAP1</label>
    </interactant>
    <organismsDiffer>false</organismsDiffer>
    <experiments>3</experiments>
</comment>
<comment type="interaction">
    <interactant intactId="EBI-748420">
        <id>Q9NSC5</id>
    </interactant>
    <interactant intactId="EBI-14086479">
        <id>Q8IVT4</id>
        <label>MGC50722</label>
    </interactant>
    <organismsDiffer>false</organismsDiffer>
    <experiments>3</experiments>
</comment>
<comment type="interaction">
    <interactant intactId="EBI-748420">
        <id>Q9NSC5</id>
    </interactant>
    <interactant intactId="EBI-2291868">
        <id>Q5JRA6</id>
        <label>MIA3</label>
    </interactant>
    <organismsDiffer>false</organismsDiffer>
    <experiments>3</experiments>
</comment>
<comment type="interaction">
    <interactant intactId="EBI-748420">
        <id>Q9NSC5</id>
    </interactant>
    <interactant intactId="EBI-1757866">
        <id>P00540</id>
        <label>MOS</label>
    </interactant>
    <organismsDiffer>false</organismsDiffer>
    <experiments>8</experiments>
</comment>
<comment type="interaction">
    <interactant intactId="EBI-748420">
        <id>Q9NSC5</id>
    </interactant>
    <interactant intactId="EBI-11599933">
        <id>Q4VC12</id>
        <label>MSS51</label>
    </interactant>
    <organismsDiffer>false</organismsDiffer>
    <experiments>3</experiments>
</comment>
<comment type="interaction">
    <interactant intactId="EBI-748420">
        <id>Q9NSC5</id>
    </interactant>
    <interactant intactId="EBI-2880203">
        <id>O76041</id>
        <label>NEBL</label>
    </interactant>
    <organismsDiffer>false</organismsDiffer>
    <experiments>3</experiments>
</comment>
<comment type="interaction">
    <interactant intactId="EBI-748420">
        <id>Q9NSC5</id>
    </interactant>
    <interactant intactId="EBI-741158">
        <id>Q96HA8</id>
        <label>NTAQ1</label>
    </interactant>
    <organismsDiffer>false</organismsDiffer>
    <experiments>3</experiments>
</comment>
<comment type="interaction">
    <interactant intactId="EBI-748420">
        <id>Q9NSC5</id>
    </interactant>
    <interactant intactId="EBI-9087860">
        <id>P32243-2</id>
        <label>OTX2</label>
    </interactant>
    <organismsDiffer>false</organismsDiffer>
    <experiments>3</experiments>
</comment>
<comment type="interaction">
    <interactant intactId="EBI-748420">
        <id>Q9NSC5</id>
    </interactant>
    <interactant intactId="EBI-12218525">
        <id>Q8WX93-2</id>
        <label>PALLD</label>
    </interactant>
    <organismsDiffer>false</organismsDiffer>
    <experiments>3</experiments>
</comment>
<comment type="interaction">
    <interactant intactId="EBI-748420">
        <id>Q9NSC5</id>
    </interactant>
    <interactant intactId="EBI-747278">
        <id>P26367</id>
        <label>PAX6</label>
    </interactant>
    <organismsDiffer>false</organismsDiffer>
    <experiments>6</experiments>
</comment>
<comment type="interaction">
    <interactant intactId="EBI-748420">
        <id>Q9NSC5</id>
    </interactant>
    <interactant intactId="EBI-12859446">
        <id>P23759-2</id>
        <label>PAX7</label>
    </interactant>
    <organismsDiffer>false</organismsDiffer>
    <experiments>3</experiments>
</comment>
<comment type="interaction">
    <interactant intactId="EBI-748420">
        <id>Q9NSC5</id>
    </interactant>
    <interactant intactId="EBI-602382">
        <id>Q16512</id>
        <label>PKN1</label>
    </interactant>
    <organismsDiffer>false</organismsDiffer>
    <experiments>7</experiments>
</comment>
<comment type="interaction">
    <interactant intactId="EBI-748420">
        <id>Q9NSC5</id>
    </interactant>
    <interactant intactId="EBI-10290304">
        <id>Q96KN8-3</id>
        <label>PLAAT5</label>
    </interactant>
    <organismsDiffer>false</organismsDiffer>
    <experiments>3</experiments>
</comment>
<comment type="interaction">
    <interactant intactId="EBI-748420">
        <id>Q9NSC5</id>
    </interactant>
    <interactant intactId="EBI-741774">
        <id>Q9UNA4</id>
        <label>POLI</label>
    </interactant>
    <organismsDiffer>false</organismsDiffer>
    <experiments>3</experiments>
</comment>
<comment type="interaction">
    <interactant intactId="EBI-748420">
        <id>Q9NSC5</id>
    </interactant>
    <interactant intactId="EBI-739990">
        <id>Q96HA1</id>
        <label>POM121</label>
    </interactant>
    <organismsDiffer>false</organismsDiffer>
    <experiments>3</experiments>
</comment>
<comment type="interaction">
    <interactant intactId="EBI-748420">
        <id>Q9NSC5</id>
    </interactant>
    <interactant intactId="EBI-11956563">
        <id>Q96HA1-2</id>
        <label>POM121</label>
    </interactant>
    <organismsDiffer>false</organismsDiffer>
    <experiments>3</experiments>
</comment>
<comment type="interaction">
    <interactant intactId="EBI-748420">
        <id>Q9NSC5</id>
    </interactant>
    <interactant intactId="EBI-2557469">
        <id>Q6NYC8</id>
        <label>PPP1R18</label>
    </interactant>
    <organismsDiffer>false</organismsDiffer>
    <experiments>6</experiments>
</comment>
<comment type="interaction">
    <interactant intactId="EBI-748420">
        <id>Q9NSC5</id>
    </interactant>
    <interactant intactId="EBI-16438356">
        <id>A0A0S2Z470</id>
        <label>PRCC</label>
    </interactant>
    <organismsDiffer>false</organismsDiffer>
    <experiments>3</experiments>
</comment>
<comment type="interaction">
    <interactant intactId="EBI-748420">
        <id>Q9NSC5</id>
    </interactant>
    <interactant intactId="EBI-4397741">
        <id>Q92733</id>
        <label>PRCC</label>
    </interactant>
    <organismsDiffer>false</organismsDiffer>
    <experiments>3</experiments>
</comment>
<comment type="interaction">
    <interactant intactId="EBI-748420">
        <id>Q9NSC5</id>
    </interactant>
    <interactant intactId="EBI-11986293">
        <id>P0CG20</id>
        <label>PRR35</label>
    </interactant>
    <organismsDiffer>false</organismsDiffer>
    <experiments>3</experiments>
</comment>
<comment type="interaction">
    <interactant intactId="EBI-748420">
        <id>Q9NSC5</id>
    </interactant>
    <interactant intactId="EBI-359352">
        <id>P25786</id>
        <label>PSMA1</label>
    </interactant>
    <organismsDiffer>false</organismsDiffer>
    <experiments>11</experiments>
</comment>
<comment type="interaction">
    <interactant intactId="EBI-748420">
        <id>Q9NSC5</id>
    </interactant>
    <interactant intactId="EBI-11974061">
        <id>Q9UIG4</id>
        <label>PSORS1C2</label>
    </interactant>
    <organismsDiffer>false</organismsDiffer>
    <experiments>3</experiments>
</comment>
<comment type="interaction">
    <interactant intactId="EBI-748420">
        <id>Q9NSC5</id>
    </interactant>
    <interactant intactId="EBI-954272">
        <id>Q96PK6</id>
        <label>RBM14</label>
    </interactant>
    <organismsDiffer>false</organismsDiffer>
    <experiments>3</experiments>
</comment>
<comment type="interaction">
    <interactant intactId="EBI-748420">
        <id>Q9NSC5</id>
    </interactant>
    <interactant intactId="EBI-2602260">
        <id>Q9NW64</id>
        <label>RBM22</label>
    </interactant>
    <organismsDiffer>false</organismsDiffer>
    <experiments>3</experiments>
</comment>
<comment type="interaction">
    <interactant intactId="EBI-748420">
        <id>Q9NSC5</id>
    </interactant>
    <interactant intactId="EBI-11984663">
        <id>Q06455-2</id>
        <label>RUNX1T1</label>
    </interactant>
    <organismsDiffer>false</organismsDiffer>
    <experiments>3</experiments>
</comment>
<comment type="interaction">
    <interactant intactId="EBI-748420">
        <id>Q9NSC5</id>
    </interactant>
    <interactant intactId="EBI-10224192">
        <id>Q06455-4</id>
        <label>RUNX1T1</label>
    </interactant>
    <organismsDiffer>false</organismsDiffer>
    <experiments>3</experiments>
</comment>
<comment type="interaction">
    <interactant intactId="EBI-748420">
        <id>Q9NSC5</id>
    </interactant>
    <interactant intactId="EBI-2320464">
        <id>Q9BW04</id>
        <label>SARG</label>
    </interactant>
    <organismsDiffer>false</organismsDiffer>
    <experiments>3</experiments>
</comment>
<comment type="interaction">
    <interactant intactId="EBI-748420">
        <id>Q9NSC5</id>
    </interactant>
    <interactant intactId="EBI-3957636">
        <id>Q8IYX7</id>
        <label>SAXO1</label>
    </interactant>
    <organismsDiffer>false</organismsDiffer>
    <experiments>3</experiments>
</comment>
<comment type="interaction">
    <interactant intactId="EBI-748420">
        <id>Q9NSC5</id>
    </interactant>
    <interactant intactId="EBI-12000762">
        <id>Q7Z5V6-2</id>
        <label>SAXO4</label>
    </interactant>
    <organismsDiffer>false</organismsDiffer>
    <experiments>3</experiments>
</comment>
<comment type="interaction">
    <interactant intactId="EBI-748420">
        <id>Q9NSC5</id>
    </interactant>
    <interactant intactId="EBI-748391">
        <id>Q9BWG6</id>
        <label>SCNM1</label>
    </interactant>
    <organismsDiffer>false</organismsDiffer>
    <experiments>3</experiments>
</comment>
<comment type="interaction">
    <interactant intactId="EBI-748420">
        <id>Q9NSC5</id>
    </interactant>
    <interactant intactId="EBI-727004">
        <id>O00560</id>
        <label>SDCBP</label>
    </interactant>
    <organismsDiffer>false</organismsDiffer>
    <experiments>5</experiments>
</comment>
<comment type="interaction">
    <interactant intactId="EBI-748420">
        <id>Q9NSC5</id>
    </interactant>
    <interactant intactId="EBI-10269374">
        <id>Q8ND83</id>
        <label>SLAIN1</label>
    </interactant>
    <organismsDiffer>false</organismsDiffer>
    <experiments>3</experiments>
</comment>
<comment type="interaction">
    <interactant intactId="EBI-748420">
        <id>Q9NSC5</id>
    </interactant>
    <interactant intactId="EBI-738612">
        <id>P02814</id>
        <label>SMR3B</label>
    </interactant>
    <organismsDiffer>false</organismsDiffer>
    <experiments>3</experiments>
</comment>
<comment type="interaction">
    <interactant intactId="EBI-748420">
        <id>Q9NSC5</id>
    </interactant>
    <interactant intactId="EBI-356900">
        <id>P62306</id>
        <label>SNRPF</label>
    </interactant>
    <organismsDiffer>false</organismsDiffer>
    <experiments>9</experiments>
</comment>
<comment type="interaction">
    <interactant intactId="EBI-748420">
        <id>Q9NSC5</id>
    </interactant>
    <interactant intactId="EBI-8787464">
        <id>Q9NU19</id>
        <label>TBC1D22B</label>
    </interactant>
    <organismsDiffer>false</organismsDiffer>
    <experiments>3</experiments>
</comment>
<comment type="interaction">
    <interactant intactId="EBI-748420">
        <id>Q9NSC5</id>
    </interactant>
    <interactant intactId="EBI-12815137">
        <id>Q96NM4-3</id>
        <label>TOX2</label>
    </interactant>
    <organismsDiffer>false</organismsDiffer>
    <experiments>3</experiments>
</comment>
<comment type="interaction">
    <interactant intactId="EBI-748420">
        <id>Q9NSC5</id>
    </interactant>
    <interactant intactId="EBI-743272">
        <id>O75604</id>
        <label>USP2</label>
    </interactant>
    <organismsDiffer>false</organismsDiffer>
    <experiments>6</experiments>
</comment>
<comment type="interaction">
    <interactant intactId="EBI-748420">
        <id>Q9NSC5</id>
    </interactant>
    <interactant intactId="EBI-727055">
        <id>Q969T9</id>
        <label>WBP2</label>
    </interactant>
    <organismsDiffer>false</organismsDiffer>
    <experiments>3</experiments>
</comment>
<comment type="interaction">
    <interactant intactId="EBI-748420">
        <id>Q9NSC5</id>
    </interactant>
    <interactant intactId="EBI-346356">
        <id>O43516</id>
        <label>WIPF1</label>
    </interactant>
    <organismsDiffer>false</organismsDiffer>
    <experiments>3</experiments>
</comment>
<comment type="interaction">
    <interactant intactId="EBI-748420">
        <id>Q9NSC5</id>
    </interactant>
    <interactant intactId="EBI-2564133">
        <id>Q9P1Z0</id>
        <label>ZBTB4</label>
    </interactant>
    <organismsDiffer>false</organismsDiffer>
    <experiments>3</experiments>
</comment>
<comment type="interaction">
    <interactant intactId="EBI-748420">
        <id>Q9NSC5</id>
    </interactant>
    <interactant intactId="EBI-12884200">
        <id>P17023</id>
        <label>ZNF19</label>
    </interactant>
    <organismsDiffer>false</organismsDiffer>
    <experiments>3</experiments>
</comment>
<comment type="interaction">
    <interactant intactId="EBI-748420">
        <id>Q9NSC5</id>
    </interactant>
    <interactant intactId="EBI-11041653">
        <id>P13682</id>
        <label>ZNF35</label>
    </interactant>
    <organismsDiffer>false</organismsDiffer>
    <experiments>3</experiments>
</comment>
<comment type="interaction">
    <interactant intactId="EBI-748420">
        <id>Q9NSC5</id>
    </interactant>
    <interactant intactId="EBI-744257">
        <id>Q96IQ9</id>
        <label>ZNF414</label>
    </interactant>
    <organismsDiffer>false</organismsDiffer>
    <experiments>3</experiments>
</comment>
<comment type="interaction">
    <interactant intactId="EBI-748420">
        <id>Q9NSC5</id>
    </interactant>
    <interactant intactId="EBI-625509">
        <id>Q8N720</id>
        <label>ZNF655</label>
    </interactant>
    <organismsDiffer>false</organismsDiffer>
    <experiments>3</experiments>
</comment>
<comment type="interaction">
    <interactant intactId="EBI-748420">
        <id>Q9NSC5</id>
    </interactant>
    <interactant intactId="EBI-20592344">
        <id>A0A3N4B5W9</id>
        <label>YPO1006</label>
    </interactant>
    <organismsDiffer>true</organismsDiffer>
    <experiments>2</experiments>
</comment>
<comment type="interaction">
    <interactant intactId="EBI-748420">
        <id>Q9NSC5</id>
    </interactant>
    <interactant intactId="EBI-20592268">
        <id>Q56973</id>
        <label>yscB</label>
    </interactant>
    <organismsDiffer>true</organismsDiffer>
    <experiments>2</experiments>
</comment>
<comment type="subcellular location">
    <subcellularLocation>
        <location evidence="1">Cytoplasm</location>
    </subcellularLocation>
    <subcellularLocation>
        <location evidence="1">Postsynaptic density</location>
    </subcellularLocation>
    <subcellularLocation>
        <location evidence="1">Synapse</location>
    </subcellularLocation>
    <text evidence="1">Postsynaptic density of neuronal cells.</text>
</comment>
<comment type="alternative products">
    <event type="alternative splicing"/>
    <isoform>
        <id>Q9NSC5-1</id>
        <name>1</name>
        <name>3a</name>
        <sequence type="displayed"/>
    </isoform>
    <isoform>
        <id>Q9NSC5-2</id>
        <name>2</name>
        <sequence type="described" ref="VSP_009077"/>
    </isoform>
    <isoform>
        <id>Q9NSC5-3</id>
        <name>3</name>
        <name>3c</name>
        <sequence type="described" ref="VSP_009075 VSP_009076"/>
    </isoform>
    <isoform>
        <id>Q9NSC5-4</id>
        <name>4</name>
        <name>3d</name>
        <sequence type="described" ref="VSP_009073 VSP_009074"/>
    </isoform>
    <isoform>
        <id>Q9NSC5-5</id>
        <name>5</name>
        <sequence type="described" ref="VSP_045715"/>
    </isoform>
</comment>
<comment type="domain">
    <text>The WH1 domain interacts with the PPXXF motif in GRM1, GRM5, RYR1, RYR2, ITPR1, SHANK 1 and SHANK3.</text>
</comment>
<comment type="similarity">
    <text evidence="15">Belongs to the Homer family.</text>
</comment>
<comment type="sequence caution" evidence="15">
    <conflict type="erroneous gene model prediction">
        <sequence resource="EMBL-CDS" id="AAB81545"/>
    </conflict>
</comment>
<keyword id="KW-0002">3D-structure</keyword>
<keyword id="KW-0025">Alternative splicing</keyword>
<keyword id="KW-0175">Coiled coil</keyword>
<keyword id="KW-0963">Cytoplasm</keyword>
<keyword id="KW-0597">Phosphoprotein</keyword>
<keyword id="KW-1267">Proteomics identification</keyword>
<keyword id="KW-1185">Reference proteome</keyword>
<keyword id="KW-0770">Synapse</keyword>
<accession>Q9NSC5</accession>
<accession>B2RA10</accession>
<accession>E9PCW9</accession>
<accession>O14580</accession>
<accession>O95350</accession>
<accession>Q9NSB9</accession>
<accession>Q9NSC0</accession>
<accession>Q9NSC1</accession>
<organism>
    <name type="scientific">Homo sapiens</name>
    <name type="common">Human</name>
    <dbReference type="NCBI Taxonomy" id="9606"/>
    <lineage>
        <taxon>Eukaryota</taxon>
        <taxon>Metazoa</taxon>
        <taxon>Chordata</taxon>
        <taxon>Craniata</taxon>
        <taxon>Vertebrata</taxon>
        <taxon>Euteleostomi</taxon>
        <taxon>Mammalia</taxon>
        <taxon>Eutheria</taxon>
        <taxon>Euarchontoglires</taxon>
        <taxon>Primates</taxon>
        <taxon>Haplorrhini</taxon>
        <taxon>Catarrhini</taxon>
        <taxon>Hominidae</taxon>
        <taxon>Homo</taxon>
    </lineage>
</organism>
<gene>
    <name evidence="16" type="primary">HOMER3</name>
</gene>
<feature type="chain" id="PRO_0000191011" description="Homer protein homolog 3">
    <location>
        <begin position="1"/>
        <end position="361"/>
    </location>
</feature>
<feature type="domain" description="WH1" evidence="5">
    <location>
        <begin position="1"/>
        <end position="113"/>
    </location>
</feature>
<feature type="region of interest" description="Required for interaction with NFATC2" evidence="10">
    <location>
        <begin position="1"/>
        <end position="80"/>
    </location>
</feature>
<feature type="region of interest" description="Disordered" evidence="6">
    <location>
        <begin position="114"/>
        <end position="169"/>
    </location>
</feature>
<feature type="coiled-coil region" evidence="4">
    <location>
        <begin position="191"/>
        <end position="243"/>
    </location>
</feature>
<feature type="coiled-coil region" evidence="4">
    <location>
        <begin position="254"/>
        <end position="358"/>
    </location>
</feature>
<feature type="modified residue" description="Phosphoserine" evidence="3">
    <location>
        <position position="120"/>
    </location>
</feature>
<feature type="modified residue" description="Phosphoserine" evidence="2">
    <location>
        <position position="159"/>
    </location>
</feature>
<feature type="splice variant" id="VSP_045715" description="In isoform 5." evidence="13">
    <location>
        <begin position="101"/>
        <end position="136"/>
    </location>
</feature>
<feature type="splice variant" id="VSP_009073" description="In isoform 4." evidence="13">
    <original>EKSQ</original>
    <variation>QLQR</variation>
    <location>
        <begin position="118"/>
        <end position="121"/>
    </location>
</feature>
<feature type="splice variant" id="VSP_009074" description="In isoform 4." evidence="13">
    <location>
        <begin position="122"/>
        <end position="361"/>
    </location>
</feature>
<feature type="splice variant" id="VSP_009075" description="In isoform 3." evidence="13">
    <original>GELTSPALGLASHQVPPSPLVS</original>
    <variation>WGGPQSALVVGSFGAVFELLIV</variation>
    <location>
        <begin position="124"/>
        <end position="145"/>
    </location>
</feature>
<feature type="splice variant" id="VSP_009076" description="In isoform 3." evidence="13">
    <location>
        <begin position="146"/>
        <end position="361"/>
    </location>
</feature>
<feature type="splice variant" id="VSP_009077" description="In isoform 2." evidence="14">
    <location>
        <begin position="299"/>
        <end position="301"/>
    </location>
</feature>
<feature type="sequence variant" id="VAR_017410" description="In dbSNP:rs1059240." evidence="7 8 9 12">
    <original>S</original>
    <variation>R</variation>
    <location>
        <position position="342"/>
    </location>
</feature>
<feature type="mutagenesis site" description="Does not affect interaction with NFATC2. Decreases interaction with NFATC2; when associated with 53-L--S-56. Decreases interaction with NFATC2; when associated with S-43 and 53-L--S-56. Markedly decreases interaction with NFATC2; when associated with T-30 and S-31 and 53-L--S-56. Impairs interaction with NFATC2; when associated with T-30; S-31; S-43 and 53-L--S-56." evidence="10">
    <original>A</original>
    <variation>N</variation>
    <location>
        <position position="22"/>
    </location>
</feature>
<feature type="mutagenesis site" description="Markedly decreases interaction with NFATC2; when associated with S-43 and 53-L--S-56. Markedly decreases interaction with NFATC2; when associated with N-22 and 53-L--S-56. Impairs interaction with NFATC2; when associated with N-22; S-43 and 53-L--S-56." evidence="10">
    <original>AG</original>
    <variation>TS</variation>
    <location>
        <begin position="30"/>
        <end position="31"/>
    </location>
</feature>
<feature type="mutagenesis site" description="Does not affect interaction with NFATC2; when associated with A-38 and A-52. Attenuates inhibition by AKT; when associated with A-38 and A-52." evidence="10">
    <original>T</original>
    <variation>A</variation>
    <location>
        <position position="36"/>
    </location>
</feature>
<feature type="mutagenesis site" description="Does not affect interaction with NFATC2; when associated with A-36 and A-52. Attenuates inhibition by AKT; when associated with A-36 and A-52." evidence="10">
    <original>S</original>
    <variation>A</variation>
    <location>
        <position position="38"/>
    </location>
</feature>
<feature type="mutagenesis site" description="Does not affect interaction with NFATC2. Decreases interaction with NFATC2; when associated with N-22 and 53-L--S-56. Markedly decreases interaction with NFATC2; when associated with T-30; S-31 and 53-L--S-56. Impairs interaction with NFATC2; when associated with N-22; T-30; S-31 and 53-L--S-56." evidence="10">
    <original>A</original>
    <variation>S</variation>
    <location>
        <position position="43"/>
    </location>
</feature>
<feature type="mutagenesis site" description="Does not affect interaction with NFATC2; when associated with A-36 and A-38. Attenuates inhibition by AKT; when associated with A-36 and A-38." evidence="10">
    <original>S</original>
    <variation>A</variation>
    <location>
        <position position="52"/>
    </location>
</feature>
<feature type="mutagenesis site" description="Decreases interaction with NFATC2. Decreases interaction with NFATC2; when associated with N-22. Decreases interaction with NFATC2; when associated with N-22 and S-43. Markedly decreases interaction with NFATC2; when associated with T-30; S-31 and S-43. Markedly decreases interaction with NFATC2; when associated with N-22; T-30 and S-31. Impairs interaction with NFATC2; when associated with N-22; T-30, S-31 and S-43." evidence="9 10">
    <original>IGGA</original>
    <variation>LDGS</variation>
    <location>
        <begin position="53"/>
        <end position="56"/>
    </location>
</feature>
<feature type="mutagenesis site" description="Decreases interaction with NFATC2." evidence="9">
    <original>G</original>
    <variation>D</variation>
    <location>
        <position position="54"/>
    </location>
</feature>
<feature type="strand" evidence="19">
    <location>
        <begin position="5"/>
        <end position="19"/>
    </location>
</feature>
<feature type="turn" evidence="19">
    <location>
        <begin position="21"/>
        <end position="23"/>
    </location>
</feature>
<feature type="strand" evidence="19">
    <location>
        <begin position="26"/>
        <end position="33"/>
    </location>
</feature>
<feature type="strand" evidence="19">
    <location>
        <begin position="35"/>
        <end position="42"/>
    </location>
</feature>
<feature type="turn" evidence="19">
    <location>
        <begin position="43"/>
        <end position="46"/>
    </location>
</feature>
<feature type="strand" evidence="19">
    <location>
        <begin position="47"/>
        <end position="54"/>
    </location>
</feature>
<feature type="strand" evidence="19">
    <location>
        <begin position="57"/>
        <end position="63"/>
    </location>
</feature>
<feature type="strand" evidence="19">
    <location>
        <begin position="70"/>
        <end position="72"/>
    </location>
</feature>
<feature type="strand" evidence="19">
    <location>
        <begin position="74"/>
        <end position="82"/>
    </location>
</feature>
<feature type="turn" evidence="19">
    <location>
        <begin position="83"/>
        <end position="86"/>
    </location>
</feature>
<feature type="strand" evidence="19">
    <location>
        <begin position="87"/>
        <end position="92"/>
    </location>
</feature>
<feature type="helix" evidence="19">
    <location>
        <begin position="96"/>
        <end position="117"/>
    </location>
</feature>
<feature type="helix" evidence="20">
    <location>
        <begin position="295"/>
        <end position="358"/>
    </location>
</feature>
<name>HOME3_HUMAN</name>